<sequence length="144" mass="16229">MKSTSDLFNEIIPLGRLIYMVNQKKDRLLNNYLSPLDITATQFKVLCSIRCAGCITPVELKKVLSVDLGALTRMLDRLLCKGWIERLPNPNDKRGVLVKLTPDGAAICEQCHQRPGQDLHQELTKNLTADEVATLEYLLKKILP</sequence>
<evidence type="ECO:0000250" key="1"/>
<evidence type="ECO:0000255" key="2">
    <source>
        <dbReference type="PROSITE-ProRule" id="PRU00345"/>
    </source>
</evidence>
<evidence type="ECO:0000305" key="3"/>
<reference key="1">
    <citation type="journal article" date="2001" name="Nature">
        <title>Complete genome sequence of a multiple drug resistant Salmonella enterica serovar Typhi CT18.</title>
        <authorList>
            <person name="Parkhill J."/>
            <person name="Dougan G."/>
            <person name="James K.D."/>
            <person name="Thomson N.R."/>
            <person name="Pickard D."/>
            <person name="Wain J."/>
            <person name="Churcher C.M."/>
            <person name="Mungall K.L."/>
            <person name="Bentley S.D."/>
            <person name="Holden M.T.G."/>
            <person name="Sebaihia M."/>
            <person name="Baker S."/>
            <person name="Basham D."/>
            <person name="Brooks K."/>
            <person name="Chillingworth T."/>
            <person name="Connerton P."/>
            <person name="Cronin A."/>
            <person name="Davis P."/>
            <person name="Davies R.M."/>
            <person name="Dowd L."/>
            <person name="White N."/>
            <person name="Farrar J."/>
            <person name="Feltwell T."/>
            <person name="Hamlin N."/>
            <person name="Haque A."/>
            <person name="Hien T.T."/>
            <person name="Holroyd S."/>
            <person name="Jagels K."/>
            <person name="Krogh A."/>
            <person name="Larsen T.S."/>
            <person name="Leather S."/>
            <person name="Moule S."/>
            <person name="O'Gaora P."/>
            <person name="Parry C."/>
            <person name="Quail M.A."/>
            <person name="Rutherford K.M."/>
            <person name="Simmonds M."/>
            <person name="Skelton J."/>
            <person name="Stevens K."/>
            <person name="Whitehead S."/>
            <person name="Barrell B.G."/>
        </authorList>
    </citation>
    <scope>NUCLEOTIDE SEQUENCE [LARGE SCALE GENOMIC DNA]</scope>
    <source>
        <strain>CT18</strain>
    </source>
</reference>
<reference key="2">
    <citation type="journal article" date="2003" name="J. Bacteriol.">
        <title>Comparative genomics of Salmonella enterica serovar Typhi strains Ty2 and CT18.</title>
        <authorList>
            <person name="Deng W."/>
            <person name="Liou S.-R."/>
            <person name="Plunkett G. III"/>
            <person name="Mayhew G.F."/>
            <person name="Rose D.J."/>
            <person name="Burland V."/>
            <person name="Kodoyianni V."/>
            <person name="Schwartz D.C."/>
            <person name="Blattner F.R."/>
        </authorList>
    </citation>
    <scope>NUCLEOTIDE SEQUENCE [LARGE SCALE GENOMIC DNA]</scope>
    <source>
        <strain>ATCC 700931 / Ty2</strain>
    </source>
</reference>
<comment type="function">
    <text evidence="1">Repressor of the marRAB operon which is involved in the activation of both antibiotic resistance and oxidative stress genes. Binds to the marO operator/promoter site (By similarity).</text>
</comment>
<comment type="sequence caution" evidence="3">
    <conflict type="erroneous initiation">
        <sequence resource="EMBL-CDS" id="AAO69083"/>
    </conflict>
</comment>
<comment type="sequence caution" evidence="3">
    <conflict type="erroneous initiation">
        <sequence resource="EMBL-CDS" id="CAD01793"/>
    </conflict>
</comment>
<name>MARR_SALTI</name>
<keyword id="KW-0046">Antibiotic resistance</keyword>
<keyword id="KW-0238">DNA-binding</keyword>
<keyword id="KW-0678">Repressor</keyword>
<keyword id="KW-0804">Transcription</keyword>
<keyword id="KW-0805">Transcription regulation</keyword>
<protein>
    <recommendedName>
        <fullName>Multiple antibiotic resistance protein MarR</fullName>
    </recommendedName>
</protein>
<accession>P0A2T5</accession>
<accession>Q56069</accession>
<accession>Q8Z702</accession>
<dbReference type="EMBL" id="AL513382">
    <property type="protein sequence ID" value="CAD01793.1"/>
    <property type="status" value="ALT_INIT"/>
    <property type="molecule type" value="Genomic_DNA"/>
</dbReference>
<dbReference type="EMBL" id="AE014613">
    <property type="protein sequence ID" value="AAO69083.1"/>
    <property type="status" value="ALT_INIT"/>
    <property type="molecule type" value="Genomic_DNA"/>
</dbReference>
<dbReference type="RefSeq" id="NP_455960.3">
    <property type="nucleotide sequence ID" value="NC_003198.1"/>
</dbReference>
<dbReference type="RefSeq" id="WP_000843434.1">
    <property type="nucleotide sequence ID" value="NZ_WSUR01000006.1"/>
</dbReference>
<dbReference type="SMR" id="P0A2T5"/>
<dbReference type="STRING" id="220341.gene:17585483"/>
<dbReference type="KEGG" id="stt:t1441"/>
<dbReference type="KEGG" id="sty:STY1540"/>
<dbReference type="PATRIC" id="fig|220341.7.peg.1549"/>
<dbReference type="eggNOG" id="COG1846">
    <property type="taxonomic scope" value="Bacteria"/>
</dbReference>
<dbReference type="HOGENOM" id="CLU_083287_18_5_6"/>
<dbReference type="OMA" id="YEATMVT"/>
<dbReference type="OrthoDB" id="6195716at2"/>
<dbReference type="Proteomes" id="UP000000541">
    <property type="component" value="Chromosome"/>
</dbReference>
<dbReference type="Proteomes" id="UP000002670">
    <property type="component" value="Chromosome"/>
</dbReference>
<dbReference type="GO" id="GO:0003677">
    <property type="term" value="F:DNA binding"/>
    <property type="evidence" value="ECO:0007669"/>
    <property type="project" value="UniProtKB-KW"/>
</dbReference>
<dbReference type="GO" id="GO:0003700">
    <property type="term" value="F:DNA-binding transcription factor activity"/>
    <property type="evidence" value="ECO:0007669"/>
    <property type="project" value="InterPro"/>
</dbReference>
<dbReference type="GO" id="GO:0046677">
    <property type="term" value="P:response to antibiotic"/>
    <property type="evidence" value="ECO:0007669"/>
    <property type="project" value="UniProtKB-KW"/>
</dbReference>
<dbReference type="GO" id="GO:0006950">
    <property type="term" value="P:response to stress"/>
    <property type="evidence" value="ECO:0007669"/>
    <property type="project" value="TreeGrafter"/>
</dbReference>
<dbReference type="FunFam" id="1.10.10.10:FF:000149">
    <property type="entry name" value="Multiple antibiotic resistance transcriptional regulator MarR"/>
    <property type="match status" value="1"/>
</dbReference>
<dbReference type="Gene3D" id="1.10.10.10">
    <property type="entry name" value="Winged helix-like DNA-binding domain superfamily/Winged helix DNA-binding domain"/>
    <property type="match status" value="1"/>
</dbReference>
<dbReference type="InterPro" id="IPR000835">
    <property type="entry name" value="HTH_MarR-typ"/>
</dbReference>
<dbReference type="InterPro" id="IPR039422">
    <property type="entry name" value="MarR/SlyA-like"/>
</dbReference>
<dbReference type="InterPro" id="IPR023187">
    <property type="entry name" value="Tscrpt_reg_MarR-type_CS"/>
</dbReference>
<dbReference type="InterPro" id="IPR036388">
    <property type="entry name" value="WH-like_DNA-bd_sf"/>
</dbReference>
<dbReference type="InterPro" id="IPR036390">
    <property type="entry name" value="WH_DNA-bd_sf"/>
</dbReference>
<dbReference type="NCBIfam" id="NF008565">
    <property type="entry name" value="PRK11512.1"/>
    <property type="match status" value="1"/>
</dbReference>
<dbReference type="PANTHER" id="PTHR33164:SF87">
    <property type="entry name" value="MULTIPLE ANTIBIOTIC RESISTANCE PROTEIN MARR"/>
    <property type="match status" value="1"/>
</dbReference>
<dbReference type="PANTHER" id="PTHR33164">
    <property type="entry name" value="TRANSCRIPTIONAL REGULATOR, MARR FAMILY"/>
    <property type="match status" value="1"/>
</dbReference>
<dbReference type="Pfam" id="PF01047">
    <property type="entry name" value="MarR"/>
    <property type="match status" value="1"/>
</dbReference>
<dbReference type="PRINTS" id="PR00598">
    <property type="entry name" value="HTHMARR"/>
</dbReference>
<dbReference type="SMART" id="SM00347">
    <property type="entry name" value="HTH_MARR"/>
    <property type="match status" value="1"/>
</dbReference>
<dbReference type="SUPFAM" id="SSF46785">
    <property type="entry name" value="Winged helix' DNA-binding domain"/>
    <property type="match status" value="1"/>
</dbReference>
<dbReference type="PROSITE" id="PS01117">
    <property type="entry name" value="HTH_MARR_1"/>
    <property type="match status" value="1"/>
</dbReference>
<dbReference type="PROSITE" id="PS50995">
    <property type="entry name" value="HTH_MARR_2"/>
    <property type="match status" value="1"/>
</dbReference>
<proteinExistence type="inferred from homology"/>
<feature type="chain" id="PRO_0000054363" description="Multiple antibiotic resistance protein MarR">
    <location>
        <begin position="1"/>
        <end position="144"/>
    </location>
</feature>
<feature type="domain" description="HTH marR-type" evidence="2">
    <location>
        <begin position="11"/>
        <end position="144"/>
    </location>
</feature>
<organism>
    <name type="scientific">Salmonella typhi</name>
    <dbReference type="NCBI Taxonomy" id="90370"/>
    <lineage>
        <taxon>Bacteria</taxon>
        <taxon>Pseudomonadati</taxon>
        <taxon>Pseudomonadota</taxon>
        <taxon>Gammaproteobacteria</taxon>
        <taxon>Enterobacterales</taxon>
        <taxon>Enterobacteriaceae</taxon>
        <taxon>Salmonella</taxon>
    </lineage>
</organism>
<gene>
    <name type="primary">marR</name>
    <name type="ordered locus">STY1540</name>
    <name type="ordered locus">t1441</name>
</gene>